<organism>
    <name type="scientific">Legionella pneumophila</name>
    <dbReference type="NCBI Taxonomy" id="446"/>
    <lineage>
        <taxon>Bacteria</taxon>
        <taxon>Pseudomonadati</taxon>
        <taxon>Pseudomonadota</taxon>
        <taxon>Gammaproteobacteria</taxon>
        <taxon>Legionellales</taxon>
        <taxon>Legionellaceae</taxon>
        <taxon>Legionella</taxon>
    </lineage>
</organism>
<name>CH10_LEGPN</name>
<gene>
    <name evidence="1" type="primary">groES</name>
    <name evidence="1" type="synonym">groS</name>
    <name type="synonym">htpA</name>
</gene>
<comment type="function">
    <text evidence="1">Together with the chaperonin GroEL, plays an essential role in assisting protein folding. The GroEL-GroES system forms a nano-cage that allows encapsulation of the non-native substrate proteins and provides a physical environment optimized to promote and accelerate protein folding. GroES binds to the apical surface of the GroEL ring, thereby capping the opening of the GroEL channel.</text>
</comment>
<comment type="subunit">
    <text evidence="1">Heptamer of 7 subunits arranged in a ring. Interacts with the chaperonin GroEL.</text>
</comment>
<comment type="subcellular location">
    <subcellularLocation>
        <location evidence="1">Cytoplasm</location>
    </subcellularLocation>
</comment>
<comment type="similarity">
    <text evidence="1 2">Belongs to the GroES chaperonin family.</text>
</comment>
<accession>P26879</accession>
<evidence type="ECO:0000255" key="1">
    <source>
        <dbReference type="HAMAP-Rule" id="MF_00580"/>
    </source>
</evidence>
<evidence type="ECO:0000305" key="2"/>
<feature type="chain" id="PRO_0000174776" description="Co-chaperonin GroES">
    <location>
        <begin position="1"/>
        <end position="96"/>
    </location>
</feature>
<dbReference type="EMBL" id="M31917">
    <property type="protein sequence ID" value="AAA25297.1"/>
    <property type="molecule type" value="Genomic_DNA"/>
</dbReference>
<dbReference type="PIR" id="B41468">
    <property type="entry name" value="B41468"/>
</dbReference>
<dbReference type="RefSeq" id="WP_010946424.1">
    <property type="nucleotide sequence ID" value="NZ_UGOV01000002.1"/>
</dbReference>
<dbReference type="SMR" id="P26879"/>
<dbReference type="STRING" id="91892.BIZ52_03750"/>
<dbReference type="GeneID" id="57034680"/>
<dbReference type="eggNOG" id="COG0234">
    <property type="taxonomic scope" value="Bacteria"/>
</dbReference>
<dbReference type="OMA" id="KVFYRQW"/>
<dbReference type="GO" id="GO:0005737">
    <property type="term" value="C:cytoplasm"/>
    <property type="evidence" value="ECO:0007669"/>
    <property type="project" value="UniProtKB-SubCell"/>
</dbReference>
<dbReference type="GO" id="GO:0005524">
    <property type="term" value="F:ATP binding"/>
    <property type="evidence" value="ECO:0007669"/>
    <property type="project" value="InterPro"/>
</dbReference>
<dbReference type="GO" id="GO:0046872">
    <property type="term" value="F:metal ion binding"/>
    <property type="evidence" value="ECO:0007669"/>
    <property type="project" value="TreeGrafter"/>
</dbReference>
<dbReference type="GO" id="GO:0044183">
    <property type="term" value="F:protein folding chaperone"/>
    <property type="evidence" value="ECO:0007669"/>
    <property type="project" value="InterPro"/>
</dbReference>
<dbReference type="GO" id="GO:0051087">
    <property type="term" value="F:protein-folding chaperone binding"/>
    <property type="evidence" value="ECO:0007669"/>
    <property type="project" value="TreeGrafter"/>
</dbReference>
<dbReference type="GO" id="GO:0051082">
    <property type="term" value="F:unfolded protein binding"/>
    <property type="evidence" value="ECO:0007669"/>
    <property type="project" value="TreeGrafter"/>
</dbReference>
<dbReference type="GO" id="GO:0051085">
    <property type="term" value="P:chaperone cofactor-dependent protein refolding"/>
    <property type="evidence" value="ECO:0007669"/>
    <property type="project" value="TreeGrafter"/>
</dbReference>
<dbReference type="CDD" id="cd00320">
    <property type="entry name" value="cpn10"/>
    <property type="match status" value="1"/>
</dbReference>
<dbReference type="FunFam" id="2.30.33.40:FF:000001">
    <property type="entry name" value="10 kDa chaperonin"/>
    <property type="match status" value="1"/>
</dbReference>
<dbReference type="Gene3D" id="2.30.33.40">
    <property type="entry name" value="GroES chaperonin"/>
    <property type="match status" value="1"/>
</dbReference>
<dbReference type="HAMAP" id="MF_00580">
    <property type="entry name" value="CH10"/>
    <property type="match status" value="1"/>
</dbReference>
<dbReference type="InterPro" id="IPR020818">
    <property type="entry name" value="Chaperonin_GroES"/>
</dbReference>
<dbReference type="InterPro" id="IPR037124">
    <property type="entry name" value="Chaperonin_GroES_sf"/>
</dbReference>
<dbReference type="InterPro" id="IPR018369">
    <property type="entry name" value="Chaprnonin_Cpn10_CS"/>
</dbReference>
<dbReference type="InterPro" id="IPR011032">
    <property type="entry name" value="GroES-like_sf"/>
</dbReference>
<dbReference type="NCBIfam" id="NF001527">
    <property type="entry name" value="PRK00364.1-2"/>
    <property type="match status" value="1"/>
</dbReference>
<dbReference type="NCBIfam" id="NF001529">
    <property type="entry name" value="PRK00364.1-5"/>
    <property type="match status" value="1"/>
</dbReference>
<dbReference type="NCBIfam" id="NF001531">
    <property type="entry name" value="PRK00364.2-2"/>
    <property type="match status" value="1"/>
</dbReference>
<dbReference type="NCBIfam" id="NF001533">
    <property type="entry name" value="PRK00364.2-4"/>
    <property type="match status" value="1"/>
</dbReference>
<dbReference type="NCBIfam" id="NF001534">
    <property type="entry name" value="PRK00364.2-5"/>
    <property type="match status" value="1"/>
</dbReference>
<dbReference type="PANTHER" id="PTHR10772">
    <property type="entry name" value="10 KDA HEAT SHOCK PROTEIN"/>
    <property type="match status" value="1"/>
</dbReference>
<dbReference type="PANTHER" id="PTHR10772:SF58">
    <property type="entry name" value="CO-CHAPERONIN GROES"/>
    <property type="match status" value="1"/>
</dbReference>
<dbReference type="Pfam" id="PF00166">
    <property type="entry name" value="Cpn10"/>
    <property type="match status" value="1"/>
</dbReference>
<dbReference type="PRINTS" id="PR00297">
    <property type="entry name" value="CHAPERONIN10"/>
</dbReference>
<dbReference type="SMART" id="SM00883">
    <property type="entry name" value="Cpn10"/>
    <property type="match status" value="1"/>
</dbReference>
<dbReference type="SUPFAM" id="SSF50129">
    <property type="entry name" value="GroES-like"/>
    <property type="match status" value="1"/>
</dbReference>
<dbReference type="PROSITE" id="PS00681">
    <property type="entry name" value="CHAPERONINS_CPN10"/>
    <property type="match status" value="1"/>
</dbReference>
<reference key="1">
    <citation type="journal article" date="1990" name="Infect. Immun.">
        <title>Legionella pneumophila htpAB heat shock operon: nucleotide sequence and expression of the 60-kilodalton antigen in L. pneumophila-infected HeLa cells.</title>
        <authorList>
            <person name="Hoffman P.S."/>
            <person name="Houston L."/>
            <person name="Butler C.A."/>
        </authorList>
    </citation>
    <scope>NUCLEOTIDE SEQUENCE [GENOMIC DNA]</scope>
    <source>
        <strain>SVir</strain>
    </source>
</reference>
<reference key="2">
    <citation type="journal article" date="1993" name="Infect. Immun.">
        <title>Phenotypic modulation by Legionella pneumophila upon infection of macrophages.</title>
        <authorList>
            <person name="Abu Kwaik Y."/>
            <person name="Eisenstein B.I."/>
            <person name="Engleberg N.C."/>
        </authorList>
    </citation>
    <scope>PROTEIN SEQUENCE OF 1-24</scope>
    <source>
        <strain>AA100 / Serogroup 1</strain>
    </source>
</reference>
<protein>
    <recommendedName>
        <fullName evidence="1">Co-chaperonin GroES</fullName>
    </recommendedName>
    <alternativeName>
        <fullName evidence="1">10 kDa chaperonin</fullName>
    </alternativeName>
    <alternativeName>
        <fullName evidence="1">Chaperonin-10</fullName>
        <shortName evidence="1">Cpn10</shortName>
    </alternativeName>
</protein>
<keyword id="KW-0143">Chaperone</keyword>
<keyword id="KW-0963">Cytoplasm</keyword>
<keyword id="KW-0903">Direct protein sequencing</keyword>
<keyword id="KW-0346">Stress response</keyword>
<proteinExistence type="evidence at protein level"/>
<sequence length="96" mass="10475">MKIRPLHDRVVVRRMEEERTTAGGIVIPDSATEKPMRGEIIAVGAGKVLENGDVRALAVKVGDVVLFGKYSGTEVKVDGKELVVMREDDIMGVIEK</sequence>